<sequence length="181" mass="19839">MSRIGKLPIMIPAGVEITFGEKNISIKGPKATLVTPKCELLSYEHKEDKIILTCNFDTRESLAQYGLRRTLLANCIEGVTKGFSKTLEVIGVGYRVSVKGNIVELSVGYSHPVHIELPDGITAKAEGQKLTIMGSDKVLVGEMAARIRRIRKPEPYKGKGIKYESEIIRRKAGKSGGKGKK</sequence>
<keyword id="KW-1185">Reference proteome</keyword>
<keyword id="KW-0687">Ribonucleoprotein</keyword>
<keyword id="KW-0689">Ribosomal protein</keyword>
<keyword id="KW-0694">RNA-binding</keyword>
<keyword id="KW-0699">rRNA-binding</keyword>
<reference key="1">
    <citation type="submission" date="2005-11" db="EMBL/GenBank/DDBJ databases">
        <title>The complete genome sequence of Lawsonia intracellularis: the causative agent of proliferative enteropathy.</title>
        <authorList>
            <person name="Kaur K."/>
            <person name="Zhang Q."/>
            <person name="Beckler D."/>
            <person name="Munir S."/>
            <person name="Li L."/>
            <person name="Kinsley K."/>
            <person name="Herron L."/>
            <person name="Peterson A."/>
            <person name="May B."/>
            <person name="Singh S."/>
            <person name="Gebhart C."/>
            <person name="Kapur V."/>
        </authorList>
    </citation>
    <scope>NUCLEOTIDE SEQUENCE [LARGE SCALE GENOMIC DNA]</scope>
    <source>
        <strain>PHE/MN1-00</strain>
    </source>
</reference>
<feature type="chain" id="PRO_0000265261" description="Large ribosomal subunit protein uL6">
    <location>
        <begin position="1"/>
        <end position="181"/>
    </location>
</feature>
<comment type="function">
    <text evidence="1">This protein binds to the 23S rRNA, and is important in its secondary structure. It is located near the subunit interface in the base of the L7/L12 stalk, and near the tRNA binding site of the peptidyltransferase center.</text>
</comment>
<comment type="subunit">
    <text evidence="1">Part of the 50S ribosomal subunit.</text>
</comment>
<comment type="similarity">
    <text evidence="1">Belongs to the universal ribosomal protein uL6 family.</text>
</comment>
<protein>
    <recommendedName>
        <fullName evidence="1">Large ribosomal subunit protein uL6</fullName>
    </recommendedName>
    <alternativeName>
        <fullName evidence="2">50S ribosomal protein L6</fullName>
    </alternativeName>
</protein>
<evidence type="ECO:0000255" key="1">
    <source>
        <dbReference type="HAMAP-Rule" id="MF_01365"/>
    </source>
</evidence>
<evidence type="ECO:0000305" key="2"/>
<proteinExistence type="inferred from homology"/>
<accession>Q1MPQ0</accession>
<name>RL6_LAWIP</name>
<gene>
    <name evidence="1" type="primary">rplF</name>
    <name type="ordered locus">LI0973</name>
</gene>
<dbReference type="EMBL" id="AM180252">
    <property type="protein sequence ID" value="CAJ55027.1"/>
    <property type="molecule type" value="Genomic_DNA"/>
</dbReference>
<dbReference type="RefSeq" id="WP_011527056.1">
    <property type="nucleotide sequence ID" value="NC_008011.1"/>
</dbReference>
<dbReference type="SMR" id="Q1MPQ0"/>
<dbReference type="STRING" id="363253.LI0973"/>
<dbReference type="KEGG" id="lip:LI0973"/>
<dbReference type="eggNOG" id="COG0097">
    <property type="taxonomic scope" value="Bacteria"/>
</dbReference>
<dbReference type="HOGENOM" id="CLU_065464_1_2_7"/>
<dbReference type="OrthoDB" id="9805007at2"/>
<dbReference type="Proteomes" id="UP000002430">
    <property type="component" value="Chromosome"/>
</dbReference>
<dbReference type="GO" id="GO:0022625">
    <property type="term" value="C:cytosolic large ribosomal subunit"/>
    <property type="evidence" value="ECO:0007669"/>
    <property type="project" value="TreeGrafter"/>
</dbReference>
<dbReference type="GO" id="GO:0019843">
    <property type="term" value="F:rRNA binding"/>
    <property type="evidence" value="ECO:0007669"/>
    <property type="project" value="UniProtKB-UniRule"/>
</dbReference>
<dbReference type="GO" id="GO:0003735">
    <property type="term" value="F:structural constituent of ribosome"/>
    <property type="evidence" value="ECO:0007669"/>
    <property type="project" value="InterPro"/>
</dbReference>
<dbReference type="GO" id="GO:0002181">
    <property type="term" value="P:cytoplasmic translation"/>
    <property type="evidence" value="ECO:0007669"/>
    <property type="project" value="TreeGrafter"/>
</dbReference>
<dbReference type="FunFam" id="3.90.930.12:FF:000001">
    <property type="entry name" value="50S ribosomal protein L6"/>
    <property type="match status" value="1"/>
</dbReference>
<dbReference type="Gene3D" id="3.90.930.12">
    <property type="entry name" value="Ribosomal protein L6, alpha-beta domain"/>
    <property type="match status" value="2"/>
</dbReference>
<dbReference type="HAMAP" id="MF_01365_B">
    <property type="entry name" value="Ribosomal_uL6_B"/>
    <property type="match status" value="1"/>
</dbReference>
<dbReference type="InterPro" id="IPR000702">
    <property type="entry name" value="Ribosomal_uL6-like"/>
</dbReference>
<dbReference type="InterPro" id="IPR036789">
    <property type="entry name" value="Ribosomal_uL6-like_a/b-dom_sf"/>
</dbReference>
<dbReference type="InterPro" id="IPR020040">
    <property type="entry name" value="Ribosomal_uL6_a/b-dom"/>
</dbReference>
<dbReference type="InterPro" id="IPR019906">
    <property type="entry name" value="Ribosomal_uL6_bac-type"/>
</dbReference>
<dbReference type="InterPro" id="IPR002358">
    <property type="entry name" value="Ribosomal_uL6_CS"/>
</dbReference>
<dbReference type="NCBIfam" id="TIGR03654">
    <property type="entry name" value="L6_bact"/>
    <property type="match status" value="1"/>
</dbReference>
<dbReference type="PANTHER" id="PTHR11655">
    <property type="entry name" value="60S/50S RIBOSOMAL PROTEIN L6/L9"/>
    <property type="match status" value="1"/>
</dbReference>
<dbReference type="PANTHER" id="PTHR11655:SF14">
    <property type="entry name" value="LARGE RIBOSOMAL SUBUNIT PROTEIN UL6M"/>
    <property type="match status" value="1"/>
</dbReference>
<dbReference type="Pfam" id="PF00347">
    <property type="entry name" value="Ribosomal_L6"/>
    <property type="match status" value="2"/>
</dbReference>
<dbReference type="PIRSF" id="PIRSF002162">
    <property type="entry name" value="Ribosomal_L6"/>
    <property type="match status" value="1"/>
</dbReference>
<dbReference type="PRINTS" id="PR00059">
    <property type="entry name" value="RIBOSOMALL6"/>
</dbReference>
<dbReference type="SUPFAM" id="SSF56053">
    <property type="entry name" value="Ribosomal protein L6"/>
    <property type="match status" value="2"/>
</dbReference>
<dbReference type="PROSITE" id="PS00525">
    <property type="entry name" value="RIBOSOMAL_L6_1"/>
    <property type="match status" value="1"/>
</dbReference>
<organism>
    <name type="scientific">Lawsonia intracellularis (strain PHE/MN1-00)</name>
    <dbReference type="NCBI Taxonomy" id="363253"/>
    <lineage>
        <taxon>Bacteria</taxon>
        <taxon>Pseudomonadati</taxon>
        <taxon>Thermodesulfobacteriota</taxon>
        <taxon>Desulfovibrionia</taxon>
        <taxon>Desulfovibrionales</taxon>
        <taxon>Desulfovibrionaceae</taxon>
        <taxon>Lawsonia</taxon>
    </lineage>
</organism>